<proteinExistence type="inferred from homology"/>
<gene>
    <name evidence="1" type="primary">rpsE</name>
    <name evidence="1" type="synonym">rps5</name>
    <name type="ordered locus">MG168</name>
</gene>
<evidence type="ECO:0000255" key="1">
    <source>
        <dbReference type="HAMAP-Rule" id="MF_01307"/>
    </source>
</evidence>
<evidence type="ECO:0000305" key="2"/>
<reference key="1">
    <citation type="journal article" date="1995" name="Science">
        <title>The minimal gene complement of Mycoplasma genitalium.</title>
        <authorList>
            <person name="Fraser C.M."/>
            <person name="Gocayne J.D."/>
            <person name="White O."/>
            <person name="Adams M.D."/>
            <person name="Clayton R.A."/>
            <person name="Fleischmann R.D."/>
            <person name="Bult C.J."/>
            <person name="Kerlavage A.R."/>
            <person name="Sutton G.G."/>
            <person name="Kelley J.M."/>
            <person name="Fritchman J.L."/>
            <person name="Weidman J.F."/>
            <person name="Small K.V."/>
            <person name="Sandusky M."/>
            <person name="Fuhrmann J.L."/>
            <person name="Nguyen D.T."/>
            <person name="Utterback T.R."/>
            <person name="Saudek D.M."/>
            <person name="Phillips C.A."/>
            <person name="Merrick J.M."/>
            <person name="Tomb J.-F."/>
            <person name="Dougherty B.A."/>
            <person name="Bott K.F."/>
            <person name="Hu P.-C."/>
            <person name="Lucier T.S."/>
            <person name="Peterson S.N."/>
            <person name="Smith H.O."/>
            <person name="Hutchison C.A. III"/>
            <person name="Venter J.C."/>
        </authorList>
    </citation>
    <scope>NUCLEOTIDE SEQUENCE [LARGE SCALE GENOMIC DNA]</scope>
    <source>
        <strain>ATCC 33530 / DSM 19775 / NCTC 10195 / G37</strain>
    </source>
</reference>
<reference key="2">
    <citation type="journal article" date="1993" name="J. Bacteriol.">
        <title>A survey of the Mycoplasma genitalium genome by using random sequencing.</title>
        <authorList>
            <person name="Peterson S.N."/>
            <person name="Hu P.-C."/>
            <person name="Bott K.F."/>
            <person name="Hutchison C.A. III"/>
        </authorList>
    </citation>
    <scope>NUCLEOTIDE SEQUENCE [GENOMIC DNA] OF 169-211</scope>
    <source>
        <strain>ATCC 33530 / DSM 19775 / NCTC 10195 / G37</strain>
    </source>
</reference>
<protein>
    <recommendedName>
        <fullName evidence="1">Small ribosomal subunit protein uS5</fullName>
    </recommendedName>
    <alternativeName>
        <fullName evidence="2">30S ribosomal protein S5</fullName>
    </alternativeName>
</protein>
<organism>
    <name type="scientific">Mycoplasma genitalium (strain ATCC 33530 / DSM 19775 / NCTC 10195 / G37)</name>
    <name type="common">Mycoplasmoides genitalium</name>
    <dbReference type="NCBI Taxonomy" id="243273"/>
    <lineage>
        <taxon>Bacteria</taxon>
        <taxon>Bacillati</taxon>
        <taxon>Mycoplasmatota</taxon>
        <taxon>Mycoplasmoidales</taxon>
        <taxon>Mycoplasmoidaceae</taxon>
        <taxon>Mycoplasmoides</taxon>
    </lineage>
</organism>
<accession>P47414</accession>
<sequence length="211" mass="23188">MNDQKTTNTGLLTSTLKTKPKHNLKPSSEAIKKAVSKKEGHYKNKRFQKHNFNNKSEFEERIVKLKRISKTTKGGRNMRFSVLVVVGNKKGKVGYGIAKALEVPLAIKKAIKKAHNSIHTVEIHKGSIYHEVIGRKGASKVLLKPAPLGTGIIAGGAIRAIVELAGFSDIYTKNLGRNTPINMIHATMDGILKQLSPKKVALLRNKPISDL</sequence>
<comment type="function">
    <text evidence="1">With S4 and S12 plays an important role in translational accuracy.</text>
</comment>
<comment type="function">
    <text evidence="1">Located at the back of the 30S subunit body where it stabilizes the conformation of the head with respect to the body.</text>
</comment>
<comment type="subunit">
    <text evidence="1">Part of the 30S ribosomal subunit. Contacts proteins S4 and S8.</text>
</comment>
<comment type="domain">
    <text>The N-terminal domain interacts with the head of the 30S subunit; the C-terminal domain interacts with the body and contacts protein S4. The interaction surface between S4 and S5 is involved in control of translational fidelity.</text>
</comment>
<comment type="similarity">
    <text evidence="1">Belongs to the universal ribosomal protein uS5 family.</text>
</comment>
<name>RS5_MYCGE</name>
<dbReference type="EMBL" id="L43967">
    <property type="protein sequence ID" value="AAC71386.1"/>
    <property type="molecule type" value="Genomic_DNA"/>
</dbReference>
<dbReference type="EMBL" id="U01726">
    <property type="protein sequence ID" value="AAC43203.1"/>
    <property type="molecule type" value="Unassigned_DNA"/>
</dbReference>
<dbReference type="PIR" id="F64218">
    <property type="entry name" value="F64218"/>
</dbReference>
<dbReference type="RefSeq" id="WP_009885854.1">
    <property type="nucleotide sequence ID" value="NC_000908.2"/>
</dbReference>
<dbReference type="SMR" id="P47414"/>
<dbReference type="FunCoup" id="P47414">
    <property type="interactions" value="226"/>
</dbReference>
<dbReference type="STRING" id="243273.MG_168"/>
<dbReference type="GeneID" id="88282301"/>
<dbReference type="KEGG" id="mge:MG_168"/>
<dbReference type="eggNOG" id="COG0098">
    <property type="taxonomic scope" value="Bacteria"/>
</dbReference>
<dbReference type="HOGENOM" id="CLU_065898_2_1_14"/>
<dbReference type="InParanoid" id="P47414"/>
<dbReference type="OrthoDB" id="9809045at2"/>
<dbReference type="BioCyc" id="MGEN243273:G1GJ2-192-MONOMER"/>
<dbReference type="Proteomes" id="UP000000807">
    <property type="component" value="Chromosome"/>
</dbReference>
<dbReference type="GO" id="GO:0022627">
    <property type="term" value="C:cytosolic small ribosomal subunit"/>
    <property type="evidence" value="ECO:0000318"/>
    <property type="project" value="GO_Central"/>
</dbReference>
<dbReference type="GO" id="GO:0019843">
    <property type="term" value="F:rRNA binding"/>
    <property type="evidence" value="ECO:0007669"/>
    <property type="project" value="UniProtKB-UniRule"/>
</dbReference>
<dbReference type="GO" id="GO:0003735">
    <property type="term" value="F:structural constituent of ribosome"/>
    <property type="evidence" value="ECO:0000318"/>
    <property type="project" value="GO_Central"/>
</dbReference>
<dbReference type="GO" id="GO:0006412">
    <property type="term" value="P:translation"/>
    <property type="evidence" value="ECO:0000318"/>
    <property type="project" value="GO_Central"/>
</dbReference>
<dbReference type="FunFam" id="3.30.230.10:FF:000002">
    <property type="entry name" value="30S ribosomal protein S5"/>
    <property type="match status" value="1"/>
</dbReference>
<dbReference type="Gene3D" id="3.30.160.20">
    <property type="match status" value="1"/>
</dbReference>
<dbReference type="Gene3D" id="3.30.230.10">
    <property type="match status" value="1"/>
</dbReference>
<dbReference type="HAMAP" id="MF_01307_B">
    <property type="entry name" value="Ribosomal_uS5_B"/>
    <property type="match status" value="1"/>
</dbReference>
<dbReference type="InterPro" id="IPR020568">
    <property type="entry name" value="Ribosomal_Su5_D2-typ_SF"/>
</dbReference>
<dbReference type="InterPro" id="IPR000851">
    <property type="entry name" value="Ribosomal_uS5"/>
</dbReference>
<dbReference type="InterPro" id="IPR005712">
    <property type="entry name" value="Ribosomal_uS5_bac-type"/>
</dbReference>
<dbReference type="InterPro" id="IPR005324">
    <property type="entry name" value="Ribosomal_uS5_C"/>
</dbReference>
<dbReference type="InterPro" id="IPR013810">
    <property type="entry name" value="Ribosomal_uS5_N"/>
</dbReference>
<dbReference type="InterPro" id="IPR018192">
    <property type="entry name" value="Ribosomal_uS5_N_CS"/>
</dbReference>
<dbReference type="InterPro" id="IPR014721">
    <property type="entry name" value="Ribsml_uS5_D2-typ_fold_subgr"/>
</dbReference>
<dbReference type="NCBIfam" id="TIGR01021">
    <property type="entry name" value="rpsE_bact"/>
    <property type="match status" value="1"/>
</dbReference>
<dbReference type="PANTHER" id="PTHR48277">
    <property type="entry name" value="MITOCHONDRIAL RIBOSOMAL PROTEIN S5"/>
    <property type="match status" value="1"/>
</dbReference>
<dbReference type="PANTHER" id="PTHR48277:SF1">
    <property type="entry name" value="MITOCHONDRIAL RIBOSOMAL PROTEIN S5"/>
    <property type="match status" value="1"/>
</dbReference>
<dbReference type="Pfam" id="PF00333">
    <property type="entry name" value="Ribosomal_S5"/>
    <property type="match status" value="1"/>
</dbReference>
<dbReference type="Pfam" id="PF03719">
    <property type="entry name" value="Ribosomal_S5_C"/>
    <property type="match status" value="1"/>
</dbReference>
<dbReference type="SUPFAM" id="SSF54768">
    <property type="entry name" value="dsRNA-binding domain-like"/>
    <property type="match status" value="1"/>
</dbReference>
<dbReference type="SUPFAM" id="SSF54211">
    <property type="entry name" value="Ribosomal protein S5 domain 2-like"/>
    <property type="match status" value="1"/>
</dbReference>
<dbReference type="PROSITE" id="PS00585">
    <property type="entry name" value="RIBOSOMAL_S5"/>
    <property type="match status" value="1"/>
</dbReference>
<dbReference type="PROSITE" id="PS50881">
    <property type="entry name" value="S5_DSRBD"/>
    <property type="match status" value="1"/>
</dbReference>
<feature type="chain" id="PRO_0000131547" description="Small ribosomal subunit protein uS5">
    <location>
        <begin position="1"/>
        <end position="211"/>
    </location>
</feature>
<feature type="domain" description="S5 DRBM" evidence="1">
    <location>
        <begin position="58"/>
        <end position="121"/>
    </location>
</feature>
<keyword id="KW-1185">Reference proteome</keyword>
<keyword id="KW-0687">Ribonucleoprotein</keyword>
<keyword id="KW-0689">Ribosomal protein</keyword>
<keyword id="KW-0694">RNA-binding</keyword>
<keyword id="KW-0699">rRNA-binding</keyword>